<name>UVRC_PARUW</name>
<sequence>MSYDPKKIDLFPTLPGVYLMKNEEGEVLYVGKAKNLRQRVKQYFVPGRDGRLMIPYLVAKINYIETIVVTSEKEALLLENNLIKQHKPRYNALLKDDKSYIALKISQNDAWATVRLVRYKGTPEPDGLYFGPYTSAQAARQTLDLLNRLFPLRQCSDQEFARRTRPCLLYQMKRCVGPCTQKCTKGEYQQHLDRTIKFLRGQNKDVLKDLYEEMRLLSEQLEFEKANHLLRTIRYIEKTIESQYVDRPLGHDADAIGLFRYGEHVVVVLMIFRGGKLVGSRHFEFDNIIEEDHELLTSFLLQHYEGATEIPSEILLPSKISDEHPVEEILSARREQKVNLQIPQRGEKKALIEIAQKNAEALFKTQKDEATLREKTLLEMQELLFLTNYPTRIECFDNSNIAGSEPVSSMVAFTDGLKDSKRYRTYRLKIGSKPDDYAAMYEVLTRRYKRAKEENDMPDLVVVDGGKGQLNIAIKVFEELNITGVDLLGLAKEAGRHDKGMTAEQVFTCYQKEPILLKANSPILFLLQKIRDEAHRVAISFHRKRRSKKTLKSALDDIPGIGPAKRKTLLTHFGSLKKIELAADAELREVKGISAANIEAIRTFFQGRKE</sequence>
<accession>Q6MDC8</accession>
<keyword id="KW-0963">Cytoplasm</keyword>
<keyword id="KW-0227">DNA damage</keyword>
<keyword id="KW-0228">DNA excision</keyword>
<keyword id="KW-0234">DNA repair</keyword>
<keyword id="KW-0267">Excision nuclease</keyword>
<keyword id="KW-1185">Reference proteome</keyword>
<keyword id="KW-0742">SOS response</keyword>
<reference key="1">
    <citation type="journal article" date="2004" name="Science">
        <title>Illuminating the evolutionary history of chlamydiae.</title>
        <authorList>
            <person name="Horn M."/>
            <person name="Collingro A."/>
            <person name="Schmitz-Esser S."/>
            <person name="Beier C.L."/>
            <person name="Purkhold U."/>
            <person name="Fartmann B."/>
            <person name="Brandt P."/>
            <person name="Nyakatura G.J."/>
            <person name="Droege M."/>
            <person name="Frishman D."/>
            <person name="Rattei T."/>
            <person name="Mewes H.-W."/>
            <person name="Wagner M."/>
        </authorList>
    </citation>
    <scope>NUCLEOTIDE SEQUENCE [LARGE SCALE GENOMIC DNA]</scope>
    <source>
        <strain>UWE25</strain>
    </source>
</reference>
<comment type="function">
    <text evidence="1">The UvrABC repair system catalyzes the recognition and processing of DNA lesions. UvrC both incises the 5' and 3' sides of the lesion. The N-terminal half is responsible for the 3' incision and the C-terminal half is responsible for the 5' incision.</text>
</comment>
<comment type="subunit">
    <text evidence="1">Interacts with UvrB in an incision complex.</text>
</comment>
<comment type="subcellular location">
    <subcellularLocation>
        <location evidence="1">Cytoplasm</location>
    </subcellularLocation>
</comment>
<comment type="similarity">
    <text evidence="1">Belongs to the UvrC family.</text>
</comment>
<evidence type="ECO:0000255" key="1">
    <source>
        <dbReference type="HAMAP-Rule" id="MF_00203"/>
    </source>
</evidence>
<gene>
    <name evidence="1" type="primary">uvrC</name>
    <name type="ordered locus">pc0697</name>
</gene>
<dbReference type="EMBL" id="BX908798">
    <property type="protein sequence ID" value="CAF23421.1"/>
    <property type="molecule type" value="Genomic_DNA"/>
</dbReference>
<dbReference type="RefSeq" id="WP_011175247.1">
    <property type="nucleotide sequence ID" value="NC_005861.2"/>
</dbReference>
<dbReference type="SMR" id="Q6MDC8"/>
<dbReference type="STRING" id="264201.pc0697"/>
<dbReference type="KEGG" id="pcu:PC_RS03345"/>
<dbReference type="eggNOG" id="COG0322">
    <property type="taxonomic scope" value="Bacteria"/>
</dbReference>
<dbReference type="HOGENOM" id="CLU_014841_3_2_0"/>
<dbReference type="OrthoDB" id="9804933at2"/>
<dbReference type="Proteomes" id="UP000000529">
    <property type="component" value="Chromosome"/>
</dbReference>
<dbReference type="GO" id="GO:0005737">
    <property type="term" value="C:cytoplasm"/>
    <property type="evidence" value="ECO:0007669"/>
    <property type="project" value="UniProtKB-SubCell"/>
</dbReference>
<dbReference type="GO" id="GO:0009380">
    <property type="term" value="C:excinuclease repair complex"/>
    <property type="evidence" value="ECO:0007669"/>
    <property type="project" value="InterPro"/>
</dbReference>
<dbReference type="GO" id="GO:0003677">
    <property type="term" value="F:DNA binding"/>
    <property type="evidence" value="ECO:0007669"/>
    <property type="project" value="UniProtKB-UniRule"/>
</dbReference>
<dbReference type="GO" id="GO:0009381">
    <property type="term" value="F:excinuclease ABC activity"/>
    <property type="evidence" value="ECO:0007669"/>
    <property type="project" value="UniProtKB-UniRule"/>
</dbReference>
<dbReference type="GO" id="GO:0006289">
    <property type="term" value="P:nucleotide-excision repair"/>
    <property type="evidence" value="ECO:0007669"/>
    <property type="project" value="UniProtKB-UniRule"/>
</dbReference>
<dbReference type="GO" id="GO:0009432">
    <property type="term" value="P:SOS response"/>
    <property type="evidence" value="ECO:0007669"/>
    <property type="project" value="UniProtKB-UniRule"/>
</dbReference>
<dbReference type="CDD" id="cd10434">
    <property type="entry name" value="GIY-YIG_UvrC_Cho"/>
    <property type="match status" value="1"/>
</dbReference>
<dbReference type="FunFam" id="3.40.1440.10:FF:000001">
    <property type="entry name" value="UvrABC system protein C"/>
    <property type="match status" value="1"/>
</dbReference>
<dbReference type="Gene3D" id="1.10.150.20">
    <property type="entry name" value="5' to 3' exonuclease, C-terminal subdomain"/>
    <property type="match status" value="1"/>
</dbReference>
<dbReference type="Gene3D" id="3.40.1440.10">
    <property type="entry name" value="GIY-YIG endonuclease"/>
    <property type="match status" value="1"/>
</dbReference>
<dbReference type="Gene3D" id="3.30.420.340">
    <property type="entry name" value="UvrC, RNAse H endonuclease domain"/>
    <property type="match status" value="1"/>
</dbReference>
<dbReference type="HAMAP" id="MF_00203">
    <property type="entry name" value="UvrC"/>
    <property type="match status" value="1"/>
</dbReference>
<dbReference type="InterPro" id="IPR000305">
    <property type="entry name" value="GIY-YIG_endonuc"/>
</dbReference>
<dbReference type="InterPro" id="IPR035901">
    <property type="entry name" value="GIY-YIG_endonuc_sf"/>
</dbReference>
<dbReference type="InterPro" id="IPR047296">
    <property type="entry name" value="GIY-YIG_UvrC_Cho"/>
</dbReference>
<dbReference type="InterPro" id="IPR010994">
    <property type="entry name" value="RuvA_2-like"/>
</dbReference>
<dbReference type="InterPro" id="IPR036876">
    <property type="entry name" value="UVR_dom_sf"/>
</dbReference>
<dbReference type="InterPro" id="IPR050066">
    <property type="entry name" value="UvrABC_protein_C"/>
</dbReference>
<dbReference type="InterPro" id="IPR004791">
    <property type="entry name" value="UvrC"/>
</dbReference>
<dbReference type="InterPro" id="IPR001162">
    <property type="entry name" value="UvrC_RNase_H_dom"/>
</dbReference>
<dbReference type="InterPro" id="IPR038476">
    <property type="entry name" value="UvrC_RNase_H_dom_sf"/>
</dbReference>
<dbReference type="NCBIfam" id="NF001824">
    <property type="entry name" value="PRK00558.1-5"/>
    <property type="match status" value="1"/>
</dbReference>
<dbReference type="NCBIfam" id="TIGR00194">
    <property type="entry name" value="uvrC"/>
    <property type="match status" value="1"/>
</dbReference>
<dbReference type="PANTHER" id="PTHR30562:SF1">
    <property type="entry name" value="UVRABC SYSTEM PROTEIN C"/>
    <property type="match status" value="1"/>
</dbReference>
<dbReference type="PANTHER" id="PTHR30562">
    <property type="entry name" value="UVRC/OXIDOREDUCTASE"/>
    <property type="match status" value="1"/>
</dbReference>
<dbReference type="Pfam" id="PF01541">
    <property type="entry name" value="GIY-YIG"/>
    <property type="match status" value="1"/>
</dbReference>
<dbReference type="Pfam" id="PF14520">
    <property type="entry name" value="HHH_5"/>
    <property type="match status" value="1"/>
</dbReference>
<dbReference type="Pfam" id="PF22920">
    <property type="entry name" value="UvrC_RNaseH"/>
    <property type="match status" value="1"/>
</dbReference>
<dbReference type="Pfam" id="PF08459">
    <property type="entry name" value="UvrC_RNaseH_dom"/>
    <property type="match status" value="1"/>
</dbReference>
<dbReference type="SMART" id="SM00465">
    <property type="entry name" value="GIYc"/>
    <property type="match status" value="1"/>
</dbReference>
<dbReference type="SUPFAM" id="SSF46600">
    <property type="entry name" value="C-terminal UvrC-binding domain of UvrB"/>
    <property type="match status" value="1"/>
</dbReference>
<dbReference type="SUPFAM" id="SSF82771">
    <property type="entry name" value="GIY-YIG endonuclease"/>
    <property type="match status" value="1"/>
</dbReference>
<dbReference type="SUPFAM" id="SSF47781">
    <property type="entry name" value="RuvA domain 2-like"/>
    <property type="match status" value="1"/>
</dbReference>
<dbReference type="PROSITE" id="PS50164">
    <property type="entry name" value="GIY_YIG"/>
    <property type="match status" value="1"/>
</dbReference>
<dbReference type="PROSITE" id="PS50165">
    <property type="entry name" value="UVRC"/>
    <property type="match status" value="1"/>
</dbReference>
<feature type="chain" id="PRO_0000227453" description="UvrABC system protein C">
    <location>
        <begin position="1"/>
        <end position="610"/>
    </location>
</feature>
<feature type="domain" description="GIY-YIG" evidence="1">
    <location>
        <begin position="13"/>
        <end position="92"/>
    </location>
</feature>
<feature type="domain" description="UVR" evidence="1">
    <location>
        <begin position="204"/>
        <end position="239"/>
    </location>
</feature>
<organism>
    <name type="scientific">Protochlamydia amoebophila (strain UWE25)</name>
    <dbReference type="NCBI Taxonomy" id="264201"/>
    <lineage>
        <taxon>Bacteria</taxon>
        <taxon>Pseudomonadati</taxon>
        <taxon>Chlamydiota</taxon>
        <taxon>Chlamydiia</taxon>
        <taxon>Parachlamydiales</taxon>
        <taxon>Parachlamydiaceae</taxon>
        <taxon>Candidatus Protochlamydia</taxon>
    </lineage>
</organism>
<protein>
    <recommendedName>
        <fullName evidence="1">UvrABC system protein C</fullName>
        <shortName evidence="1">Protein UvrC</shortName>
    </recommendedName>
    <alternativeName>
        <fullName evidence="1">Excinuclease ABC subunit C</fullName>
    </alternativeName>
</protein>
<proteinExistence type="inferred from homology"/>